<feature type="signal peptide" evidence="3">
    <location>
        <begin position="1"/>
        <end position="18"/>
    </location>
</feature>
<feature type="chain" id="PRO_5000223755" description="Phospholipase A1" evidence="3">
    <location>
        <begin position="19"/>
        <end position="322"/>
    </location>
</feature>
<feature type="active site" description="Nucleophile" evidence="1">
    <location>
        <position position="156"/>
    </location>
</feature>
<feature type="active site" description="Charge relay system" evidence="2">
    <location>
        <position position="184"/>
    </location>
</feature>
<feature type="active site" description="Charge relay system" evidence="2">
    <location>
        <position position="248"/>
    </location>
</feature>
<feature type="disulfide bond" evidence="1">
    <location>
        <begin position="23"/>
        <end position="106"/>
    </location>
</feature>
<feature type="disulfide bond" evidence="1">
    <location>
        <begin position="195"/>
        <end position="200"/>
    </location>
</feature>
<feature type="disulfide bond" evidence="1">
    <location>
        <begin position="238"/>
        <end position="246"/>
    </location>
</feature>
<feature type="disulfide bond" evidence="1">
    <location>
        <begin position="263"/>
        <end position="290"/>
    </location>
</feature>
<feature type="disulfide bond" evidence="1">
    <location>
        <begin position="264"/>
        <end position="315"/>
    </location>
</feature>
<feature type="disulfide bond" evidence="1">
    <location>
        <begin position="283"/>
        <end position="288"/>
    </location>
</feature>
<reference key="1">
    <citation type="submission" date="2006-11" db="EMBL/GenBank/DDBJ databases">
        <authorList>
            <person name="Santos L.D."/>
            <person name="Santos K.S."/>
            <person name="de Souza B.M."/>
            <person name="Neto E.C."/>
            <person name="Castro F.M."/>
            <person name="Kalil J.E."/>
            <person name="Palma M.S."/>
        </authorList>
    </citation>
    <scope>NUCLEOTIDE SEQUENCE [MRNA]</scope>
    <source>
        <tissue>Venom gland</tissue>
    </source>
</reference>
<reference key="2">
    <citation type="thesis" date="2007" institute="Sao Paulo State University (UNESP)" country="Brazil">
        <title>Proteomic analysis of immunodominant allergens from the venom of the social wasp Polybia paulista.</title>
        <authorList>
            <person name="Santos L.D."/>
        </authorList>
    </citation>
    <scope>NUCLEOTIDE SEQUENCE [MRNA]</scope>
    <source>
        <tissue>Venom gland</tissue>
    </source>
</reference>
<reference key="3">
    <citation type="journal article" date="2007" name="Toxicon">
        <title>Purification, sequencing and structural characterization of the phospholipase A(1) from the venom of the social wasp Polybia paulista (Hymenoptera, Vespidae).</title>
        <authorList>
            <person name="Santos L.D."/>
            <person name="Santos K.S."/>
            <person name="de Souza B.M."/>
            <person name="Arcuri H.A."/>
            <person name="Cunha-Neto E."/>
            <person name="Castro F.M."/>
            <person name="Kalil J.E."/>
            <person name="Palma M.S."/>
        </authorList>
    </citation>
    <scope>PROTEIN SEQUENCE OF 19-322</scope>
    <scope>CATALYTIC ACTIVITY</scope>
    <scope>SUBCELLULAR LOCATION</scope>
    <scope>MASS SPECTROMETRY</scope>
    <scope>ALLERGEN</scope>
    <scope>3D-STRUCTURE MODELING</scope>
    <source>
        <tissue>Venom</tissue>
    </source>
</reference>
<protein>
    <recommendedName>
        <fullName evidence="4">Phospholipase A1</fullName>
        <shortName evidence="4">PLA1</shortName>
        <ecNumber evidence="3">3.1.1.32</ecNumber>
    </recommendedName>
    <allergenName evidence="4">Poly p 1</allergenName>
</protein>
<dbReference type="EC" id="3.1.1.32" evidence="3"/>
<dbReference type="EMBL" id="EF101736">
    <property type="protein sequence ID" value="ABN13879.1"/>
    <property type="molecule type" value="mRNA"/>
</dbReference>
<dbReference type="EMBL" id="AM491805">
    <property type="protein sequence ID" value="CAM33429.1"/>
    <property type="molecule type" value="mRNA"/>
</dbReference>
<dbReference type="SMR" id="A2VBC4"/>
<dbReference type="Allergome" id="3608">
    <property type="allergen name" value="Poly p 1"/>
</dbReference>
<dbReference type="Allergome" id="3609">
    <property type="allergen name" value="Poly p 1.0101"/>
</dbReference>
<dbReference type="ESTHER" id="polpi-pa1">
    <property type="family name" value="Insect_Phospholipase"/>
</dbReference>
<dbReference type="BRENDA" id="3.1.1.32">
    <property type="organism ID" value="9385"/>
</dbReference>
<dbReference type="GO" id="GO:0005615">
    <property type="term" value="C:extracellular space"/>
    <property type="evidence" value="ECO:0007669"/>
    <property type="project" value="TreeGrafter"/>
</dbReference>
<dbReference type="GO" id="GO:0008970">
    <property type="term" value="F:phospholipase A1 activity"/>
    <property type="evidence" value="ECO:0007669"/>
    <property type="project" value="UniProtKB-EC"/>
</dbReference>
<dbReference type="GO" id="GO:0031640">
    <property type="term" value="P:killing of cells of another organism"/>
    <property type="evidence" value="ECO:0007669"/>
    <property type="project" value="UniProtKB-KW"/>
</dbReference>
<dbReference type="GO" id="GO:0016042">
    <property type="term" value="P:lipid catabolic process"/>
    <property type="evidence" value="ECO:0007669"/>
    <property type="project" value="UniProtKB-KW"/>
</dbReference>
<dbReference type="CDD" id="cd00707">
    <property type="entry name" value="Pancreat_lipase_like"/>
    <property type="match status" value="1"/>
</dbReference>
<dbReference type="Gene3D" id="3.40.50.1820">
    <property type="entry name" value="alpha/beta hydrolase"/>
    <property type="match status" value="1"/>
</dbReference>
<dbReference type="InterPro" id="IPR029058">
    <property type="entry name" value="AB_hydrolase_fold"/>
</dbReference>
<dbReference type="InterPro" id="IPR002334">
    <property type="entry name" value="Allerg_PlipaseA1"/>
</dbReference>
<dbReference type="InterPro" id="IPR013818">
    <property type="entry name" value="Lipase"/>
</dbReference>
<dbReference type="InterPro" id="IPR033906">
    <property type="entry name" value="Lipase_N"/>
</dbReference>
<dbReference type="InterPro" id="IPR000734">
    <property type="entry name" value="TAG_lipase"/>
</dbReference>
<dbReference type="PANTHER" id="PTHR11610">
    <property type="entry name" value="LIPASE"/>
    <property type="match status" value="1"/>
</dbReference>
<dbReference type="Pfam" id="PF00151">
    <property type="entry name" value="Lipase"/>
    <property type="match status" value="1"/>
</dbReference>
<dbReference type="PRINTS" id="PR00825">
    <property type="entry name" value="DOLALLERGEN"/>
</dbReference>
<dbReference type="SUPFAM" id="SSF53474">
    <property type="entry name" value="alpha/beta-Hydrolases"/>
    <property type="match status" value="1"/>
</dbReference>
<dbReference type="PROSITE" id="PS00120">
    <property type="entry name" value="LIPASE_SER"/>
    <property type="match status" value="1"/>
</dbReference>
<organism>
    <name type="scientific">Polybia paulista</name>
    <name type="common">Neotropical social wasp</name>
    <name type="synonym">Swarm-founding polistine wasp</name>
    <dbReference type="NCBI Taxonomy" id="291283"/>
    <lineage>
        <taxon>Eukaryota</taxon>
        <taxon>Metazoa</taxon>
        <taxon>Ecdysozoa</taxon>
        <taxon>Arthropoda</taxon>
        <taxon>Hexapoda</taxon>
        <taxon>Insecta</taxon>
        <taxon>Pterygota</taxon>
        <taxon>Neoptera</taxon>
        <taxon>Endopterygota</taxon>
        <taxon>Hymenoptera</taxon>
        <taxon>Apocrita</taxon>
        <taxon>Aculeata</taxon>
        <taxon>Vespoidea</taxon>
        <taxon>Vespidae</taxon>
        <taxon>Polistinae</taxon>
        <taxon>Epiponini</taxon>
        <taxon>Polybia</taxon>
    </lineage>
</organism>
<keyword id="KW-0020">Allergen</keyword>
<keyword id="KW-0204">Cytolysis</keyword>
<keyword id="KW-0903">Direct protein sequencing</keyword>
<keyword id="KW-1015">Disulfide bond</keyword>
<keyword id="KW-0354">Hemolysis</keyword>
<keyword id="KW-0378">Hydrolase</keyword>
<keyword id="KW-0442">Lipid degradation</keyword>
<keyword id="KW-0443">Lipid metabolism</keyword>
<keyword id="KW-0964">Secreted</keyword>
<keyword id="KW-0732">Signal</keyword>
<sequence>MNFKYSILFICFGTLDRGLIPECPFNEYDILFFVYTRQQRDGIVLTEETLQNYDLFKKSTISRQVVFIDHGFLSNGNNENFIAMAKALIEKDNFLVISVDWKKGACNAFASTLDYLGYSTAVGNTRHVGKYVADFTKLLVEQYKVSMSNIRLIGHSLGAHTSGFAGKEVQELKLNKYSNIDGLDPAGPSFDSNDCPERLCETDAEYVQIIHTSNILGVYSKIGTVDFYMNYGSHQPGCGRFFSPSCSHTKAVKYLTECIKHECCLIGTPWKKYFSTPKPISQCTKDTCVCVGLNAKSYPARGSFYVPVEATAPYCHNEGIKL</sequence>
<name>PA1_POLPI</name>
<evidence type="ECO:0000250" key="1">
    <source>
        <dbReference type="UniProtKB" id="A0A0M3KKW3"/>
    </source>
</evidence>
<evidence type="ECO:0000255" key="2">
    <source>
        <dbReference type="PROSITE-ProRule" id="PRU10037"/>
    </source>
</evidence>
<evidence type="ECO:0000269" key="3">
    <source>
    </source>
</evidence>
<evidence type="ECO:0000303" key="4">
    <source>
    </source>
</evidence>
<evidence type="ECO:0000305" key="5"/>
<evidence type="ECO:0000305" key="6">
    <source>
    </source>
</evidence>
<accession>A2VBC4</accession>
<comment type="function">
    <text evidence="3">Catalyzes the hydrolysis of phosphatidylcholine with phospholipase A1 activity (PubMed:17761205). Shows hemolytic activity (PubMed:17761205). Acts as an allergen (PubMed:17761205).</text>
</comment>
<comment type="catalytic activity">
    <reaction evidence="3">
        <text>a 1,2-diacyl-sn-glycero-3-phosphocholine + H2O = a 2-acyl-sn-glycero-3-phosphocholine + a fatty acid + H(+)</text>
        <dbReference type="Rhea" id="RHEA:18689"/>
        <dbReference type="ChEBI" id="CHEBI:15377"/>
        <dbReference type="ChEBI" id="CHEBI:15378"/>
        <dbReference type="ChEBI" id="CHEBI:28868"/>
        <dbReference type="ChEBI" id="CHEBI:57643"/>
        <dbReference type="ChEBI" id="CHEBI:57875"/>
        <dbReference type="EC" id="3.1.1.32"/>
    </reaction>
</comment>
<comment type="subcellular location">
    <subcellularLocation>
        <location evidence="3">Secreted</location>
    </subcellularLocation>
</comment>
<comment type="tissue specificity">
    <text evidence="6">Expressed by the venom gland.</text>
</comment>
<comment type="PTM">
    <text evidence="3">Contains six disulfide bonds.</text>
</comment>
<comment type="PTM">
    <text evidence="3">Is not glycosylated.</text>
</comment>
<comment type="mass spectrometry"/>
<comment type="allergen">
    <text evidence="3">Causes an allergic reaction in human. Binds to IgE.</text>
</comment>
<comment type="similarity">
    <text evidence="5">Belongs to the AB hydrolase superfamily. Lipase family.</text>
</comment>
<proteinExistence type="evidence at protein level"/>